<organism>
    <name type="scientific">Streptomyces avermitilis (strain ATCC 31267 / DSM 46492 / JCM 5070 / NBRC 14893 / NCIMB 12804 / NRRL 8165 / MA-4680)</name>
    <dbReference type="NCBI Taxonomy" id="227882"/>
    <lineage>
        <taxon>Bacteria</taxon>
        <taxon>Bacillati</taxon>
        <taxon>Actinomycetota</taxon>
        <taxon>Actinomycetes</taxon>
        <taxon>Kitasatosporales</taxon>
        <taxon>Streptomycetaceae</taxon>
        <taxon>Streptomyces</taxon>
    </lineage>
</organism>
<protein>
    <recommendedName>
        <fullName evidence="1">S-adenosylmethionine synthase</fullName>
        <shortName evidence="1">AdoMet synthase</shortName>
        <ecNumber evidence="1">2.5.1.6</ecNumber>
    </recommendedName>
    <alternativeName>
        <fullName evidence="1">MAT</fullName>
    </alternativeName>
    <alternativeName>
        <fullName evidence="1">Methionine adenosyltransferase</fullName>
    </alternativeName>
</protein>
<evidence type="ECO:0000255" key="1">
    <source>
        <dbReference type="HAMAP-Rule" id="MF_00086"/>
    </source>
</evidence>
<feature type="chain" id="PRO_0000174597" description="S-adenosylmethionine synthase">
    <location>
        <begin position="1"/>
        <end position="402"/>
    </location>
</feature>
<feature type="region of interest" description="Flexible loop" evidence="1">
    <location>
        <begin position="99"/>
        <end position="109"/>
    </location>
</feature>
<feature type="binding site" description="in other chain" evidence="1">
    <location>
        <position position="15"/>
    </location>
    <ligand>
        <name>ATP</name>
        <dbReference type="ChEBI" id="CHEBI:30616"/>
        <note>ligand shared between two neighboring subunits</note>
    </ligand>
</feature>
<feature type="binding site" evidence="1">
    <location>
        <position position="17"/>
    </location>
    <ligand>
        <name>Mg(2+)</name>
        <dbReference type="ChEBI" id="CHEBI:18420"/>
    </ligand>
</feature>
<feature type="binding site" evidence="1">
    <location>
        <position position="43"/>
    </location>
    <ligand>
        <name>K(+)</name>
        <dbReference type="ChEBI" id="CHEBI:29103"/>
    </ligand>
</feature>
<feature type="binding site" description="in other chain" evidence="1">
    <location>
        <position position="56"/>
    </location>
    <ligand>
        <name>L-methionine</name>
        <dbReference type="ChEBI" id="CHEBI:57844"/>
        <note>ligand shared between two neighboring subunits</note>
    </ligand>
</feature>
<feature type="binding site" description="in other chain" evidence="1">
    <location>
        <position position="99"/>
    </location>
    <ligand>
        <name>L-methionine</name>
        <dbReference type="ChEBI" id="CHEBI:57844"/>
        <note>ligand shared between two neighboring subunits</note>
    </ligand>
</feature>
<feature type="binding site" description="in other chain" evidence="1">
    <location>
        <begin position="174"/>
        <end position="176"/>
    </location>
    <ligand>
        <name>ATP</name>
        <dbReference type="ChEBI" id="CHEBI:30616"/>
        <note>ligand shared between two neighboring subunits</note>
    </ligand>
</feature>
<feature type="binding site" description="in other chain" evidence="1">
    <location>
        <begin position="247"/>
        <end position="248"/>
    </location>
    <ligand>
        <name>ATP</name>
        <dbReference type="ChEBI" id="CHEBI:30616"/>
        <note>ligand shared between two neighboring subunits</note>
    </ligand>
</feature>
<feature type="binding site" evidence="1">
    <location>
        <position position="256"/>
    </location>
    <ligand>
        <name>ATP</name>
        <dbReference type="ChEBI" id="CHEBI:30616"/>
        <note>ligand shared between two neighboring subunits</note>
    </ligand>
</feature>
<feature type="binding site" evidence="1">
    <location>
        <position position="256"/>
    </location>
    <ligand>
        <name>L-methionine</name>
        <dbReference type="ChEBI" id="CHEBI:57844"/>
        <note>ligand shared between two neighboring subunits</note>
    </ligand>
</feature>
<feature type="binding site" description="in other chain" evidence="1">
    <location>
        <begin position="262"/>
        <end position="263"/>
    </location>
    <ligand>
        <name>ATP</name>
        <dbReference type="ChEBI" id="CHEBI:30616"/>
        <note>ligand shared between two neighboring subunits</note>
    </ligand>
</feature>
<feature type="binding site" evidence="1">
    <location>
        <position position="279"/>
    </location>
    <ligand>
        <name>ATP</name>
        <dbReference type="ChEBI" id="CHEBI:30616"/>
        <note>ligand shared between two neighboring subunits</note>
    </ligand>
</feature>
<feature type="binding site" evidence="1">
    <location>
        <position position="283"/>
    </location>
    <ligand>
        <name>ATP</name>
        <dbReference type="ChEBI" id="CHEBI:30616"/>
        <note>ligand shared between two neighboring subunits</note>
    </ligand>
</feature>
<feature type="binding site" description="in other chain" evidence="1">
    <location>
        <position position="287"/>
    </location>
    <ligand>
        <name>L-methionine</name>
        <dbReference type="ChEBI" id="CHEBI:57844"/>
        <note>ligand shared between two neighboring subunits</note>
    </ligand>
</feature>
<accession>Q827Q0</accession>
<sequence length="402" mass="43488">MSRRLFTSESVTEGHPDKIADQISDTILDALLREDPTSRVAVETLITTGLVHVAGEVTTKAYAPIAQLVRDKILEIGYDSSKKGFDGASCGVSVSIGSQSPDIAQGVDTAYENRVEGDEDELDRQGAGDQGLMFGYATDETPTLMPLPIHLAHRLSHRLSEVRKNGTIPYLRPDGKTQVTIEYDGDKAVRLDTVVVSSQHASDIDLDSLLAPDIREFVVEPELKALLDDGIKLETEGYRLLVNPTGRFEIGGPMGDAGLTGRKIIIDTYGGMARHGGGAFSGKDPSKVDRSAAYAMRWVAKNVVAAGLASRCEVQVAYAIGKAEPVGLFVETFGTAKVEADKIEQAIATVFDLRPAAIIRDLDLLRPIYSQTAAYGHFGRELPDFTWERTDRVDALRTAVGL</sequence>
<keyword id="KW-0067">ATP-binding</keyword>
<keyword id="KW-0963">Cytoplasm</keyword>
<keyword id="KW-0460">Magnesium</keyword>
<keyword id="KW-0479">Metal-binding</keyword>
<keyword id="KW-0547">Nucleotide-binding</keyword>
<keyword id="KW-0554">One-carbon metabolism</keyword>
<keyword id="KW-0630">Potassium</keyword>
<keyword id="KW-1185">Reference proteome</keyword>
<keyword id="KW-0808">Transferase</keyword>
<comment type="function">
    <text evidence="1">Catalyzes the formation of S-adenosylmethionine (AdoMet) from methionine and ATP. The overall synthetic reaction is composed of two sequential steps, AdoMet formation and the subsequent tripolyphosphate hydrolysis which occurs prior to release of AdoMet from the enzyme.</text>
</comment>
<comment type="catalytic activity">
    <reaction evidence="1">
        <text>L-methionine + ATP + H2O = S-adenosyl-L-methionine + phosphate + diphosphate</text>
        <dbReference type="Rhea" id="RHEA:21080"/>
        <dbReference type="ChEBI" id="CHEBI:15377"/>
        <dbReference type="ChEBI" id="CHEBI:30616"/>
        <dbReference type="ChEBI" id="CHEBI:33019"/>
        <dbReference type="ChEBI" id="CHEBI:43474"/>
        <dbReference type="ChEBI" id="CHEBI:57844"/>
        <dbReference type="ChEBI" id="CHEBI:59789"/>
        <dbReference type="EC" id="2.5.1.6"/>
    </reaction>
</comment>
<comment type="cofactor">
    <cofactor evidence="1">
        <name>Mg(2+)</name>
        <dbReference type="ChEBI" id="CHEBI:18420"/>
    </cofactor>
    <text evidence="1">Binds 2 divalent ions per subunit.</text>
</comment>
<comment type="cofactor">
    <cofactor evidence="1">
        <name>K(+)</name>
        <dbReference type="ChEBI" id="CHEBI:29103"/>
    </cofactor>
    <text evidence="1">Binds 1 potassium ion per subunit.</text>
</comment>
<comment type="pathway">
    <text evidence="1">Amino-acid biosynthesis; S-adenosyl-L-methionine biosynthesis; S-adenosyl-L-methionine from L-methionine: step 1/1.</text>
</comment>
<comment type="subunit">
    <text evidence="1">Homotetramer; dimer of dimers.</text>
</comment>
<comment type="subcellular location">
    <subcellularLocation>
        <location evidence="1">Cytoplasm</location>
    </subcellularLocation>
</comment>
<comment type="similarity">
    <text evidence="1">Belongs to the AdoMet synthase family.</text>
</comment>
<gene>
    <name evidence="1" type="primary">metK</name>
    <name type="ordered locus">SAV_6874</name>
</gene>
<reference key="1">
    <citation type="journal article" date="2001" name="Proc. Natl. Acad. Sci. U.S.A.">
        <title>Genome sequence of an industrial microorganism Streptomyces avermitilis: deducing the ability of producing secondary metabolites.</title>
        <authorList>
            <person name="Omura S."/>
            <person name="Ikeda H."/>
            <person name="Ishikawa J."/>
            <person name="Hanamoto A."/>
            <person name="Takahashi C."/>
            <person name="Shinose M."/>
            <person name="Takahashi Y."/>
            <person name="Horikawa H."/>
            <person name="Nakazawa H."/>
            <person name="Osonoe T."/>
            <person name="Kikuchi H."/>
            <person name="Shiba T."/>
            <person name="Sakaki Y."/>
            <person name="Hattori M."/>
        </authorList>
    </citation>
    <scope>NUCLEOTIDE SEQUENCE [LARGE SCALE GENOMIC DNA]</scope>
    <source>
        <strain>ATCC 31267 / DSM 46492 / JCM 5070 / NBRC 14893 / NCIMB 12804 / NRRL 8165 / MA-4680</strain>
    </source>
</reference>
<reference key="2">
    <citation type="journal article" date="2003" name="Nat. Biotechnol.">
        <title>Complete genome sequence and comparative analysis of the industrial microorganism Streptomyces avermitilis.</title>
        <authorList>
            <person name="Ikeda H."/>
            <person name="Ishikawa J."/>
            <person name="Hanamoto A."/>
            <person name="Shinose M."/>
            <person name="Kikuchi H."/>
            <person name="Shiba T."/>
            <person name="Sakaki Y."/>
            <person name="Hattori M."/>
            <person name="Omura S."/>
        </authorList>
    </citation>
    <scope>NUCLEOTIDE SEQUENCE [LARGE SCALE GENOMIC DNA]</scope>
    <source>
        <strain>ATCC 31267 / DSM 46492 / JCM 5070 / NBRC 14893 / NCIMB 12804 / NRRL 8165 / MA-4680</strain>
    </source>
</reference>
<dbReference type="EC" id="2.5.1.6" evidence="1"/>
<dbReference type="EMBL" id="BA000030">
    <property type="protein sequence ID" value="BAC74585.1"/>
    <property type="molecule type" value="Genomic_DNA"/>
</dbReference>
<dbReference type="RefSeq" id="WP_010988272.1">
    <property type="nucleotide sequence ID" value="NZ_JZJK01000082.1"/>
</dbReference>
<dbReference type="SMR" id="Q827Q0"/>
<dbReference type="GeneID" id="41543949"/>
<dbReference type="KEGG" id="sma:SAVERM_6874"/>
<dbReference type="eggNOG" id="COG0192">
    <property type="taxonomic scope" value="Bacteria"/>
</dbReference>
<dbReference type="HOGENOM" id="CLU_041802_1_1_11"/>
<dbReference type="OrthoDB" id="9801686at2"/>
<dbReference type="UniPathway" id="UPA00315">
    <property type="reaction ID" value="UER00080"/>
</dbReference>
<dbReference type="Proteomes" id="UP000000428">
    <property type="component" value="Chromosome"/>
</dbReference>
<dbReference type="GO" id="GO:0005737">
    <property type="term" value="C:cytoplasm"/>
    <property type="evidence" value="ECO:0007669"/>
    <property type="project" value="UniProtKB-SubCell"/>
</dbReference>
<dbReference type="GO" id="GO:0005524">
    <property type="term" value="F:ATP binding"/>
    <property type="evidence" value="ECO:0007669"/>
    <property type="project" value="UniProtKB-UniRule"/>
</dbReference>
<dbReference type="GO" id="GO:0000287">
    <property type="term" value="F:magnesium ion binding"/>
    <property type="evidence" value="ECO:0007669"/>
    <property type="project" value="UniProtKB-UniRule"/>
</dbReference>
<dbReference type="GO" id="GO:0004478">
    <property type="term" value="F:methionine adenosyltransferase activity"/>
    <property type="evidence" value="ECO:0007669"/>
    <property type="project" value="UniProtKB-UniRule"/>
</dbReference>
<dbReference type="GO" id="GO:0006730">
    <property type="term" value="P:one-carbon metabolic process"/>
    <property type="evidence" value="ECO:0007669"/>
    <property type="project" value="UniProtKB-KW"/>
</dbReference>
<dbReference type="GO" id="GO:0006556">
    <property type="term" value="P:S-adenosylmethionine biosynthetic process"/>
    <property type="evidence" value="ECO:0007669"/>
    <property type="project" value="UniProtKB-UniRule"/>
</dbReference>
<dbReference type="CDD" id="cd18079">
    <property type="entry name" value="S-AdoMet_synt"/>
    <property type="match status" value="1"/>
</dbReference>
<dbReference type="FunFam" id="3.30.300.10:FF:000006">
    <property type="entry name" value="S-adenosylmethionine synthase"/>
    <property type="match status" value="1"/>
</dbReference>
<dbReference type="Gene3D" id="3.30.300.10">
    <property type="match status" value="3"/>
</dbReference>
<dbReference type="HAMAP" id="MF_00086">
    <property type="entry name" value="S_AdoMet_synth1"/>
    <property type="match status" value="1"/>
</dbReference>
<dbReference type="InterPro" id="IPR022631">
    <property type="entry name" value="ADOMET_SYNTHASE_CS"/>
</dbReference>
<dbReference type="InterPro" id="IPR022630">
    <property type="entry name" value="S-AdoMet_synt_C"/>
</dbReference>
<dbReference type="InterPro" id="IPR022629">
    <property type="entry name" value="S-AdoMet_synt_central"/>
</dbReference>
<dbReference type="InterPro" id="IPR022628">
    <property type="entry name" value="S-AdoMet_synt_N"/>
</dbReference>
<dbReference type="InterPro" id="IPR002133">
    <property type="entry name" value="S-AdoMet_synthetase"/>
</dbReference>
<dbReference type="InterPro" id="IPR022636">
    <property type="entry name" value="S-AdoMet_synthetase_sfam"/>
</dbReference>
<dbReference type="NCBIfam" id="TIGR01034">
    <property type="entry name" value="metK"/>
    <property type="match status" value="1"/>
</dbReference>
<dbReference type="PANTHER" id="PTHR11964">
    <property type="entry name" value="S-ADENOSYLMETHIONINE SYNTHETASE"/>
    <property type="match status" value="1"/>
</dbReference>
<dbReference type="Pfam" id="PF02773">
    <property type="entry name" value="S-AdoMet_synt_C"/>
    <property type="match status" value="1"/>
</dbReference>
<dbReference type="Pfam" id="PF02772">
    <property type="entry name" value="S-AdoMet_synt_M"/>
    <property type="match status" value="1"/>
</dbReference>
<dbReference type="Pfam" id="PF00438">
    <property type="entry name" value="S-AdoMet_synt_N"/>
    <property type="match status" value="1"/>
</dbReference>
<dbReference type="PIRSF" id="PIRSF000497">
    <property type="entry name" value="MAT"/>
    <property type="match status" value="1"/>
</dbReference>
<dbReference type="SUPFAM" id="SSF55973">
    <property type="entry name" value="S-adenosylmethionine synthetase"/>
    <property type="match status" value="3"/>
</dbReference>
<dbReference type="PROSITE" id="PS00376">
    <property type="entry name" value="ADOMET_SYNTHASE_1"/>
    <property type="match status" value="1"/>
</dbReference>
<dbReference type="PROSITE" id="PS00377">
    <property type="entry name" value="ADOMET_SYNTHASE_2"/>
    <property type="match status" value="1"/>
</dbReference>
<name>METK_STRAW</name>
<proteinExistence type="inferred from homology"/>